<organism>
    <name type="scientific">Dugesia japonica</name>
    <name type="common">Planarian</name>
    <dbReference type="NCBI Taxonomy" id="6161"/>
    <lineage>
        <taxon>Eukaryota</taxon>
        <taxon>Metazoa</taxon>
        <taxon>Spiralia</taxon>
        <taxon>Lophotrochozoa</taxon>
        <taxon>Platyhelminthes</taxon>
        <taxon>Rhabditophora</taxon>
        <taxon>Seriata</taxon>
        <taxon>Tricladida</taxon>
        <taxon>Continenticola</taxon>
        <taxon>Geoplanoidea</taxon>
        <taxon>Dugesiidae</taxon>
        <taxon>Dugesia</taxon>
    </lineage>
</organism>
<proteinExistence type="evidence at transcript level"/>
<feature type="signal peptide" evidence="2">
    <location>
        <begin position="1"/>
        <end position="20"/>
    </location>
</feature>
<feature type="chain" id="PRO_0000249212" description="Fibroblast growth factor receptor 1">
    <location>
        <begin position="21"/>
        <end position="854"/>
    </location>
</feature>
<feature type="topological domain" description="Extracellular" evidence="2">
    <location>
        <begin position="21"/>
        <end position="383"/>
    </location>
</feature>
<feature type="transmembrane region" description="Helical" evidence="2">
    <location>
        <begin position="384"/>
        <end position="404"/>
    </location>
</feature>
<feature type="topological domain" description="Cytoplasmic" evidence="2">
    <location>
        <begin position="405"/>
        <end position="854"/>
    </location>
</feature>
<feature type="domain" description="Ig-like C2-type 1">
    <location>
        <begin position="29"/>
        <end position="120"/>
    </location>
</feature>
<feature type="domain" description="Ig-like C2-type 2">
    <location>
        <begin position="147"/>
        <end position="259"/>
    </location>
</feature>
<feature type="domain" description="Ig-like C2-type 3">
    <location>
        <begin position="268"/>
        <end position="369"/>
    </location>
</feature>
<feature type="domain" description="Protein kinase" evidence="4">
    <location>
        <begin position="551"/>
        <end position="822"/>
    </location>
</feature>
<feature type="active site" description="Proton acceptor" evidence="4 5">
    <location>
        <position position="689"/>
    </location>
</feature>
<feature type="binding site" evidence="4">
    <location>
        <begin position="557"/>
        <end position="565"/>
    </location>
    <ligand>
        <name>ATP</name>
        <dbReference type="ChEBI" id="CHEBI:30616"/>
    </ligand>
</feature>
<feature type="binding site" evidence="4">
    <location>
        <position position="585"/>
    </location>
    <ligand>
        <name>ATP</name>
        <dbReference type="ChEBI" id="CHEBI:30616"/>
    </ligand>
</feature>
<feature type="modified residue" description="Phosphotyrosine; by autocatalysis" evidence="1">
    <location>
        <position position="718"/>
    </location>
</feature>
<feature type="glycosylation site" description="N-linked (GlcNAc...) asparagine" evidence="2">
    <location>
        <position position="95"/>
    </location>
</feature>
<feature type="glycosylation site" description="N-linked (GlcNAc...) asparagine" evidence="2">
    <location>
        <position position="99"/>
    </location>
</feature>
<feature type="glycosylation site" description="N-linked (GlcNAc...) asparagine" evidence="2">
    <location>
        <position position="110"/>
    </location>
</feature>
<feature type="glycosylation site" description="N-linked (GlcNAc...) asparagine" evidence="2">
    <location>
        <position position="118"/>
    </location>
</feature>
<feature type="glycosylation site" description="N-linked (GlcNAc...) asparagine" evidence="2">
    <location>
        <position position="140"/>
    </location>
</feature>
<feature type="glycosylation site" description="N-linked (GlcNAc...) asparagine" evidence="2">
    <location>
        <position position="175"/>
    </location>
</feature>
<feature type="glycosylation site" description="N-linked (GlcNAc...) asparagine" evidence="2">
    <location>
        <position position="202"/>
    </location>
</feature>
<feature type="glycosylation site" description="N-linked (GlcNAc...) asparagine" evidence="2">
    <location>
        <position position="248"/>
    </location>
</feature>
<feature type="glycosylation site" description="N-linked (GlcNAc...) asparagine" evidence="2">
    <location>
        <position position="283"/>
    </location>
</feature>
<feature type="glycosylation site" description="N-linked (GlcNAc...) asparagine" evidence="2">
    <location>
        <position position="317"/>
    </location>
</feature>
<feature type="glycosylation site" description="N-linked (GlcNAc...) asparagine" evidence="2">
    <location>
        <position position="346"/>
    </location>
</feature>
<feature type="disulfide bond" evidence="3">
    <location>
        <begin position="50"/>
        <end position="102"/>
    </location>
</feature>
<feature type="disulfide bond" evidence="3">
    <location>
        <begin position="166"/>
        <end position="242"/>
    </location>
</feature>
<feature type="disulfide bond" evidence="3">
    <location>
        <begin position="288"/>
        <end position="353"/>
    </location>
</feature>
<comment type="function">
    <text>Receptor for basic fibroblast growth factor.</text>
</comment>
<comment type="catalytic activity">
    <reaction evidence="5">
        <text>L-tyrosyl-[protein] + ATP = O-phospho-L-tyrosyl-[protein] + ADP + H(+)</text>
        <dbReference type="Rhea" id="RHEA:10596"/>
        <dbReference type="Rhea" id="RHEA-COMP:10136"/>
        <dbReference type="Rhea" id="RHEA-COMP:20101"/>
        <dbReference type="ChEBI" id="CHEBI:15378"/>
        <dbReference type="ChEBI" id="CHEBI:30616"/>
        <dbReference type="ChEBI" id="CHEBI:46858"/>
        <dbReference type="ChEBI" id="CHEBI:61978"/>
        <dbReference type="ChEBI" id="CHEBI:456216"/>
        <dbReference type="EC" id="2.7.10.1"/>
    </reaction>
</comment>
<comment type="subcellular location">
    <subcellularLocation>
        <location evidence="7">Membrane</location>
        <topology evidence="7">Single-pass type I membrane protein</topology>
    </subcellularLocation>
</comment>
<comment type="tissue specificity">
    <text evidence="6">Expressed in brain, stem cells and the mesenchymal cells.</text>
</comment>
<comment type="developmental stage">
    <text evidence="6">Expression is observed in the cephalic ganglion and mesenchymal space in intact planarians. In regenerating planarians, accumulation was observed in the blastema and in fragments regenerating either a pharynx or a brain.</text>
</comment>
<comment type="similarity">
    <text evidence="4">Belongs to the protein kinase superfamily. Tyr protein kinase family. Fibroblast growth factor receptor subfamily.</text>
</comment>
<dbReference type="EC" id="2.7.10.1"/>
<dbReference type="EMBL" id="AB074425">
    <property type="protein sequence ID" value="BAB92085.1"/>
    <property type="molecule type" value="mRNA"/>
</dbReference>
<dbReference type="SMR" id="Q8MY86"/>
<dbReference type="GlyCosmos" id="Q8MY86">
    <property type="glycosylation" value="11 sites, No reported glycans"/>
</dbReference>
<dbReference type="GO" id="GO:0005886">
    <property type="term" value="C:plasma membrane"/>
    <property type="evidence" value="ECO:0007669"/>
    <property type="project" value="TreeGrafter"/>
</dbReference>
<dbReference type="GO" id="GO:0043235">
    <property type="term" value="C:receptor complex"/>
    <property type="evidence" value="ECO:0007669"/>
    <property type="project" value="TreeGrafter"/>
</dbReference>
<dbReference type="GO" id="GO:0005524">
    <property type="term" value="F:ATP binding"/>
    <property type="evidence" value="ECO:0007669"/>
    <property type="project" value="UniProtKB-KW"/>
</dbReference>
<dbReference type="GO" id="GO:0004714">
    <property type="term" value="F:transmembrane receptor protein tyrosine kinase activity"/>
    <property type="evidence" value="ECO:0007669"/>
    <property type="project" value="UniProtKB-EC"/>
</dbReference>
<dbReference type="GO" id="GO:0007169">
    <property type="term" value="P:cell surface receptor protein tyrosine kinase signaling pathway"/>
    <property type="evidence" value="ECO:0007669"/>
    <property type="project" value="TreeGrafter"/>
</dbReference>
<dbReference type="CDD" id="cd00192">
    <property type="entry name" value="PTKc"/>
    <property type="match status" value="1"/>
</dbReference>
<dbReference type="FunFam" id="1.10.510.10:FF:000554">
    <property type="entry name" value="Predicted protein"/>
    <property type="match status" value="1"/>
</dbReference>
<dbReference type="FunFam" id="3.30.200.20:FF:000593">
    <property type="entry name" value="Predicted protein"/>
    <property type="match status" value="1"/>
</dbReference>
<dbReference type="Gene3D" id="2.60.40.10">
    <property type="entry name" value="Immunoglobulins"/>
    <property type="match status" value="2"/>
</dbReference>
<dbReference type="Gene3D" id="3.30.200.20">
    <property type="entry name" value="Phosphorylase Kinase, domain 1"/>
    <property type="match status" value="1"/>
</dbReference>
<dbReference type="Gene3D" id="1.10.510.10">
    <property type="entry name" value="Transferase(Phosphotransferase) domain 1"/>
    <property type="match status" value="1"/>
</dbReference>
<dbReference type="InterPro" id="IPR007110">
    <property type="entry name" value="Ig-like_dom"/>
</dbReference>
<dbReference type="InterPro" id="IPR036179">
    <property type="entry name" value="Ig-like_dom_sf"/>
</dbReference>
<dbReference type="InterPro" id="IPR013783">
    <property type="entry name" value="Ig-like_fold"/>
</dbReference>
<dbReference type="InterPro" id="IPR003599">
    <property type="entry name" value="Ig_sub"/>
</dbReference>
<dbReference type="InterPro" id="IPR011009">
    <property type="entry name" value="Kinase-like_dom_sf"/>
</dbReference>
<dbReference type="InterPro" id="IPR000719">
    <property type="entry name" value="Prot_kinase_dom"/>
</dbReference>
<dbReference type="InterPro" id="IPR017441">
    <property type="entry name" value="Protein_kinase_ATP_BS"/>
</dbReference>
<dbReference type="InterPro" id="IPR050122">
    <property type="entry name" value="RTK"/>
</dbReference>
<dbReference type="InterPro" id="IPR001245">
    <property type="entry name" value="Ser-Thr/Tyr_kinase_cat_dom"/>
</dbReference>
<dbReference type="InterPro" id="IPR008266">
    <property type="entry name" value="Tyr_kinase_AS"/>
</dbReference>
<dbReference type="PANTHER" id="PTHR24416:SF550">
    <property type="entry name" value="FIBROBLAST GROWTH FACTOR RECEPTOR HOMOLOG 1-RELATED"/>
    <property type="match status" value="1"/>
</dbReference>
<dbReference type="PANTHER" id="PTHR24416">
    <property type="entry name" value="TYROSINE-PROTEIN KINASE RECEPTOR"/>
    <property type="match status" value="1"/>
</dbReference>
<dbReference type="Pfam" id="PF07714">
    <property type="entry name" value="PK_Tyr_Ser-Thr"/>
    <property type="match status" value="1"/>
</dbReference>
<dbReference type="PIRSF" id="PIRSF000615">
    <property type="entry name" value="TyrPK_CSF1-R"/>
    <property type="match status" value="1"/>
</dbReference>
<dbReference type="PRINTS" id="PR00109">
    <property type="entry name" value="TYRKINASE"/>
</dbReference>
<dbReference type="SMART" id="SM00409">
    <property type="entry name" value="IG"/>
    <property type="match status" value="3"/>
</dbReference>
<dbReference type="SUPFAM" id="SSF48726">
    <property type="entry name" value="Immunoglobulin"/>
    <property type="match status" value="2"/>
</dbReference>
<dbReference type="SUPFAM" id="SSF56112">
    <property type="entry name" value="Protein kinase-like (PK-like)"/>
    <property type="match status" value="1"/>
</dbReference>
<dbReference type="PROSITE" id="PS50835">
    <property type="entry name" value="IG_LIKE"/>
    <property type="match status" value="2"/>
</dbReference>
<dbReference type="PROSITE" id="PS00107">
    <property type="entry name" value="PROTEIN_KINASE_ATP"/>
    <property type="match status" value="1"/>
</dbReference>
<dbReference type="PROSITE" id="PS50011">
    <property type="entry name" value="PROTEIN_KINASE_DOM"/>
    <property type="match status" value="1"/>
</dbReference>
<dbReference type="PROSITE" id="PS00109">
    <property type="entry name" value="PROTEIN_KINASE_TYR"/>
    <property type="match status" value="1"/>
</dbReference>
<gene>
    <name type="primary">FGFR1</name>
</gene>
<keyword id="KW-0067">ATP-binding</keyword>
<keyword id="KW-1015">Disulfide bond</keyword>
<keyword id="KW-0325">Glycoprotein</keyword>
<keyword id="KW-0393">Immunoglobulin domain</keyword>
<keyword id="KW-0418">Kinase</keyword>
<keyword id="KW-0472">Membrane</keyword>
<keyword id="KW-0547">Nucleotide-binding</keyword>
<keyword id="KW-0597">Phosphoprotein</keyword>
<keyword id="KW-0675">Receptor</keyword>
<keyword id="KW-0677">Repeat</keyword>
<keyword id="KW-0732">Signal</keyword>
<keyword id="KW-0808">Transferase</keyword>
<keyword id="KW-0812">Transmembrane</keyword>
<keyword id="KW-1133">Transmembrane helix</keyword>
<keyword id="KW-0829">Tyrosine-protein kinase</keyword>
<name>FGFR1_DUGJA</name>
<protein>
    <recommendedName>
        <fullName>Fibroblast growth factor receptor 1</fullName>
        <shortName>DjFgfr1</shortName>
        <shortName>FGFR-1</shortName>
        <ecNumber>2.7.10.1</ecNumber>
    </recommendedName>
    <alternativeName>
        <fullName>DjPTK3</fullName>
    </alternativeName>
</protein>
<reference key="1">
    <citation type="journal article" date="2002" name="Dev. Growth Differ.">
        <title>Planarian fibroblast growth factor receptor homologs expressed in stem cells and cephalic ganglions.</title>
        <authorList>
            <person name="Ogawa K."/>
            <person name="Kobayashi C."/>
            <person name="Hayashi T."/>
            <person name="Orii H."/>
            <person name="Watanabe K."/>
            <person name="Agata K."/>
        </authorList>
    </citation>
    <scope>NUCLEOTIDE SEQUENCE [MRNA]</scope>
    <scope>DEVELOPMENTAL STAGE</scope>
    <scope>TISSUE SPECIFICITY</scope>
    <source>
        <strain>GI</strain>
    </source>
</reference>
<accession>Q8MY86</accession>
<evidence type="ECO:0000250" key="1"/>
<evidence type="ECO:0000255" key="2"/>
<evidence type="ECO:0000255" key="3">
    <source>
        <dbReference type="PROSITE-ProRule" id="PRU00114"/>
    </source>
</evidence>
<evidence type="ECO:0000255" key="4">
    <source>
        <dbReference type="PROSITE-ProRule" id="PRU00159"/>
    </source>
</evidence>
<evidence type="ECO:0000255" key="5">
    <source>
        <dbReference type="PROSITE-ProRule" id="PRU10028"/>
    </source>
</evidence>
<evidence type="ECO:0000269" key="6">
    <source>
    </source>
</evidence>
<evidence type="ECO:0000305" key="7"/>
<sequence length="854" mass="98633">MSGLFFLLSELLILLGKINSVSKKSLCHPELFKIDNKLNWRTSEEMVLTCKAVVNEKCKKSKLQMRWYKDNELLGKKIERGLKMKYRYRKKLKLNDSGNYTCFVFNKNGNSSVFFLINVTEKENFHVNENKILDGSEISNNTLYLHPEMGMENYHVIPNDEIVMQCRFFSPISINLTVSWYQHSCDSNYHNAQLLVKDSKFNISSNKESCQSYLSHIPLDSICLYSWLRFIATSDDQSCITCLIESDNNSIEKTKFTFTVLVDAGHRPHLTFAPSSTVCQGSNFTMKCETNVPRPILYIYKLDPSFNIENPIIHLSNSTLFVNNYNEDSKRSSQSAEVLIKSMDFNYSGRYLCSLAELPLFEIMHLSVIKCSNNFFMNSVPLSIFLVIGFFVAIILLSLIIYCFFLQYKNAVDSRKHFSIRKTVIVEYESPIYKSFINGTKNFKTDVLHTNSLLPDSNPLLPPIIKIKPIKRLSQFRDGNYGEQLPSTSTDRTRLESTRHSQLENEVFECGSGNNSLSLKYGLRKSSSFEFFSLYEFPCDAKWEFPREKLKITNKKLGEGAFGMVYEGIANDIGNRSNPIKVAVKMMRDDFSDSNVHDFVKEMEIMKHIGRHPNVIQLLGLCTQKGPLRVIVELAPYGNLRDFVRAKNKKYSKSKKIIGNFTSSILCTYSLQIARGMTYLASRSVVHRDLSARNILVGEHFEMKIADFGLTRIVDYYYRKKTDGILPVKWMAPEALLEKKYTTKSDVWSYGILLWEIFTLGDSPYSAILPEKVVDLIRKGFQNPKPELANFEIYRLMQHCWSLSSENRPNFFEIVEILIDIIQRIDDEPEENIYHSELNYLKMESDYLEPKCLV</sequence>